<reference key="1">
    <citation type="journal article" date="2005" name="Infect. Immun.">
        <title>Comparative genomic analysis of Chlamydia trachomatis oculotropic and genitotropic strains.</title>
        <authorList>
            <person name="Carlson J.H."/>
            <person name="Porcella S.F."/>
            <person name="McClarty G."/>
            <person name="Caldwell H.D."/>
        </authorList>
    </citation>
    <scope>NUCLEOTIDE SEQUENCE [LARGE SCALE GENOMIC DNA]</scope>
    <source>
        <strain>ATCC VR-571B / DSM 19440 / HAR-13</strain>
    </source>
</reference>
<organism>
    <name type="scientific">Chlamydia trachomatis serovar A (strain ATCC VR-571B / DSM 19440 / HAR-13)</name>
    <dbReference type="NCBI Taxonomy" id="315277"/>
    <lineage>
        <taxon>Bacteria</taxon>
        <taxon>Pseudomonadati</taxon>
        <taxon>Chlamydiota</taxon>
        <taxon>Chlamydiia</taxon>
        <taxon>Chlamydiales</taxon>
        <taxon>Chlamydiaceae</taxon>
        <taxon>Chlamydia/Chlamydophila group</taxon>
        <taxon>Chlamydia</taxon>
    </lineage>
</organism>
<feature type="chain" id="PRO_1000060187" description="Na(+)-translocating NADH-quinone reductase subunit E">
    <location>
        <begin position="1"/>
        <end position="244"/>
    </location>
</feature>
<feature type="transmembrane region" description="Helical" evidence="1">
    <location>
        <begin position="11"/>
        <end position="31"/>
    </location>
</feature>
<feature type="transmembrane region" description="Helical" evidence="1">
    <location>
        <begin position="50"/>
        <end position="70"/>
    </location>
</feature>
<feature type="transmembrane region" description="Helical" evidence="1">
    <location>
        <begin position="90"/>
        <end position="110"/>
    </location>
</feature>
<feature type="transmembrane region" description="Helical" evidence="1">
    <location>
        <begin position="123"/>
        <end position="143"/>
    </location>
</feature>
<feature type="transmembrane region" description="Helical" evidence="1">
    <location>
        <begin position="153"/>
        <end position="173"/>
    </location>
</feature>
<feature type="transmembrane region" description="Helical" evidence="1">
    <location>
        <begin position="191"/>
        <end position="211"/>
    </location>
</feature>
<feature type="region of interest" description="Disordered" evidence="2">
    <location>
        <begin position="222"/>
        <end position="244"/>
    </location>
</feature>
<feature type="compositionally biased region" description="Polar residues" evidence="2">
    <location>
        <begin position="222"/>
        <end position="236"/>
    </location>
</feature>
<sequence>MWLGDYSLLNLLGIFLQATFIQNILLSTFLGMCSYLACSSRLSTANGLGMSVALVLTITGSINWLVHYFITKPGALAWLSPALANIDLSFLELIMFIVVIAAFTQILEVLLERFSRNLYLALGIFLPLIAVNCAILGGVLFGITRNYPFLPMVVFSLGSGCGWWLAIVLFATIREKLAYSDVPQHLRGTGISFITTGLMAMAFMGLTGIDISKPTTSKPAFVTNIATDSPQPNTHSSSEEPKAS</sequence>
<evidence type="ECO:0000255" key="1">
    <source>
        <dbReference type="HAMAP-Rule" id="MF_00429"/>
    </source>
</evidence>
<evidence type="ECO:0000256" key="2">
    <source>
        <dbReference type="SAM" id="MobiDB-lite"/>
    </source>
</evidence>
<keyword id="KW-0997">Cell inner membrane</keyword>
<keyword id="KW-1003">Cell membrane</keyword>
<keyword id="KW-0406">Ion transport</keyword>
<keyword id="KW-0472">Membrane</keyword>
<keyword id="KW-0520">NAD</keyword>
<keyword id="KW-0915">Sodium</keyword>
<keyword id="KW-0739">Sodium transport</keyword>
<keyword id="KW-1278">Translocase</keyword>
<keyword id="KW-0812">Transmembrane</keyword>
<keyword id="KW-1133">Transmembrane helix</keyword>
<keyword id="KW-0813">Transport</keyword>
<keyword id="KW-0830">Ubiquinone</keyword>
<gene>
    <name evidence="1" type="primary">nqrE</name>
    <name type="ordered locus">CTA_0303</name>
</gene>
<dbReference type="EC" id="7.2.1.1" evidence="1"/>
<dbReference type="EMBL" id="CP000051">
    <property type="protein sequence ID" value="AAX50541.1"/>
    <property type="molecule type" value="Genomic_DNA"/>
</dbReference>
<dbReference type="RefSeq" id="WP_009871628.1">
    <property type="nucleotide sequence ID" value="NC_007429.1"/>
</dbReference>
<dbReference type="SMR" id="Q3KM81"/>
<dbReference type="KEGG" id="cta:CTA_0303"/>
<dbReference type="HOGENOM" id="CLU_095255_0_0_0"/>
<dbReference type="Proteomes" id="UP000002532">
    <property type="component" value="Chromosome"/>
</dbReference>
<dbReference type="GO" id="GO:0009276">
    <property type="term" value="C:Gram-negative-bacterium-type cell wall"/>
    <property type="evidence" value="ECO:0007669"/>
    <property type="project" value="InterPro"/>
</dbReference>
<dbReference type="GO" id="GO:0005886">
    <property type="term" value="C:plasma membrane"/>
    <property type="evidence" value="ECO:0007669"/>
    <property type="project" value="UniProtKB-SubCell"/>
</dbReference>
<dbReference type="GO" id="GO:0016655">
    <property type="term" value="F:oxidoreductase activity, acting on NAD(P)H, quinone or similar compound as acceptor"/>
    <property type="evidence" value="ECO:0007669"/>
    <property type="project" value="UniProtKB-UniRule"/>
</dbReference>
<dbReference type="GO" id="GO:0022904">
    <property type="term" value="P:respiratory electron transport chain"/>
    <property type="evidence" value="ECO:0007669"/>
    <property type="project" value="InterPro"/>
</dbReference>
<dbReference type="GO" id="GO:0006814">
    <property type="term" value="P:sodium ion transport"/>
    <property type="evidence" value="ECO:0007669"/>
    <property type="project" value="UniProtKB-UniRule"/>
</dbReference>
<dbReference type="HAMAP" id="MF_00429">
    <property type="entry name" value="NqrE"/>
    <property type="match status" value="1"/>
</dbReference>
<dbReference type="InterPro" id="IPR003667">
    <property type="entry name" value="NqrDE/RnfAE"/>
</dbReference>
<dbReference type="InterPro" id="IPR050133">
    <property type="entry name" value="NqrDE/RnfAE_oxidrdctase"/>
</dbReference>
<dbReference type="InterPro" id="IPR010967">
    <property type="entry name" value="NqrE"/>
</dbReference>
<dbReference type="NCBIfam" id="TIGR01940">
    <property type="entry name" value="nqrE"/>
    <property type="match status" value="1"/>
</dbReference>
<dbReference type="NCBIfam" id="NF002200">
    <property type="entry name" value="PRK01061.1"/>
    <property type="match status" value="1"/>
</dbReference>
<dbReference type="PANTHER" id="PTHR30335">
    <property type="entry name" value="INTEGRAL MEMBRANE PROTEIN OF SOXR-REDUCING COMPLEX"/>
    <property type="match status" value="1"/>
</dbReference>
<dbReference type="PANTHER" id="PTHR30335:SF1">
    <property type="entry name" value="NA(+)-TRANSLOCATING NADH-QUINONE REDUCTASE SUBUNIT E"/>
    <property type="match status" value="1"/>
</dbReference>
<dbReference type="Pfam" id="PF02508">
    <property type="entry name" value="Rnf-Nqr"/>
    <property type="match status" value="1"/>
</dbReference>
<dbReference type="PIRSF" id="PIRSF006102">
    <property type="entry name" value="NQR_DE"/>
    <property type="match status" value="1"/>
</dbReference>
<proteinExistence type="inferred from homology"/>
<protein>
    <recommendedName>
        <fullName evidence="1">Na(+)-translocating NADH-quinone reductase subunit E</fullName>
        <shortName evidence="1">Na(+)-NQR subunit E</shortName>
        <shortName evidence="1">Na(+)-translocating NQR subunit E</shortName>
        <ecNumber evidence="1">7.2.1.1</ecNumber>
    </recommendedName>
    <alternativeName>
        <fullName evidence="1">NQR complex subunit E</fullName>
    </alternativeName>
    <alternativeName>
        <fullName evidence="1">NQR-1 subunit E</fullName>
    </alternativeName>
</protein>
<accession>Q3KM81</accession>
<comment type="function">
    <text evidence="1">NQR complex catalyzes the reduction of ubiquinone-1 to ubiquinol by two successive reactions, coupled with the transport of Na(+) ions from the cytoplasm to the periplasm. NqrA to NqrE are probably involved in the second step, the conversion of ubisemiquinone to ubiquinol.</text>
</comment>
<comment type="catalytic activity">
    <reaction evidence="1">
        <text>a ubiquinone + n Na(+)(in) + NADH + H(+) = a ubiquinol + n Na(+)(out) + NAD(+)</text>
        <dbReference type="Rhea" id="RHEA:47748"/>
        <dbReference type="Rhea" id="RHEA-COMP:9565"/>
        <dbReference type="Rhea" id="RHEA-COMP:9566"/>
        <dbReference type="ChEBI" id="CHEBI:15378"/>
        <dbReference type="ChEBI" id="CHEBI:16389"/>
        <dbReference type="ChEBI" id="CHEBI:17976"/>
        <dbReference type="ChEBI" id="CHEBI:29101"/>
        <dbReference type="ChEBI" id="CHEBI:57540"/>
        <dbReference type="ChEBI" id="CHEBI:57945"/>
        <dbReference type="EC" id="7.2.1.1"/>
    </reaction>
</comment>
<comment type="subunit">
    <text evidence="1">Composed of six subunits; NqrA, NqrB, NqrC, NqrD, NqrE and NqrF.</text>
</comment>
<comment type="subcellular location">
    <subcellularLocation>
        <location evidence="1">Cell inner membrane</location>
        <topology evidence="1">Multi-pass membrane protein</topology>
    </subcellularLocation>
</comment>
<comment type="similarity">
    <text evidence="1">Belongs to the NqrDE/RnfAE family.</text>
</comment>
<name>NQRE_CHLTA</name>